<comment type="function">
    <text evidence="1">DNA-dependent RNA polymerase catalyzes the transcription of DNA into RNA using the four ribonucleoside triphosphates as substrates.</text>
</comment>
<comment type="catalytic activity">
    <reaction evidence="1">
        <text>RNA(n) + a ribonucleoside 5'-triphosphate = RNA(n+1) + diphosphate</text>
        <dbReference type="Rhea" id="RHEA:21248"/>
        <dbReference type="Rhea" id="RHEA-COMP:14527"/>
        <dbReference type="Rhea" id="RHEA-COMP:17342"/>
        <dbReference type="ChEBI" id="CHEBI:33019"/>
        <dbReference type="ChEBI" id="CHEBI:61557"/>
        <dbReference type="ChEBI" id="CHEBI:140395"/>
        <dbReference type="EC" id="2.7.7.6"/>
    </reaction>
</comment>
<comment type="subunit">
    <text evidence="1">The RNAP catalytic core consists of 2 alpha, 1 beta, 1 beta' and 1 omega subunit. When a sigma factor is associated with the core the holoenzyme is formed, which can initiate transcription.</text>
</comment>
<comment type="similarity">
    <text evidence="1">Belongs to the RNA polymerase beta chain family.</text>
</comment>
<evidence type="ECO:0000255" key="1">
    <source>
        <dbReference type="HAMAP-Rule" id="MF_01321"/>
    </source>
</evidence>
<proteinExistence type="inferred from homology"/>
<reference key="1">
    <citation type="journal article" date="2009" name="PLoS Genet.">
        <title>Organised genome dynamics in the Escherichia coli species results in highly diverse adaptive paths.</title>
        <authorList>
            <person name="Touchon M."/>
            <person name="Hoede C."/>
            <person name="Tenaillon O."/>
            <person name="Barbe V."/>
            <person name="Baeriswyl S."/>
            <person name="Bidet P."/>
            <person name="Bingen E."/>
            <person name="Bonacorsi S."/>
            <person name="Bouchier C."/>
            <person name="Bouvet O."/>
            <person name="Calteau A."/>
            <person name="Chiapello H."/>
            <person name="Clermont O."/>
            <person name="Cruveiller S."/>
            <person name="Danchin A."/>
            <person name="Diard M."/>
            <person name="Dossat C."/>
            <person name="Karoui M.E."/>
            <person name="Frapy E."/>
            <person name="Garry L."/>
            <person name="Ghigo J.M."/>
            <person name="Gilles A.M."/>
            <person name="Johnson J."/>
            <person name="Le Bouguenec C."/>
            <person name="Lescat M."/>
            <person name="Mangenot S."/>
            <person name="Martinez-Jehanne V."/>
            <person name="Matic I."/>
            <person name="Nassif X."/>
            <person name="Oztas S."/>
            <person name="Petit M.A."/>
            <person name="Pichon C."/>
            <person name="Rouy Z."/>
            <person name="Ruf C.S."/>
            <person name="Schneider D."/>
            <person name="Tourret J."/>
            <person name="Vacherie B."/>
            <person name="Vallenet D."/>
            <person name="Medigue C."/>
            <person name="Rocha E.P.C."/>
            <person name="Denamur E."/>
        </authorList>
    </citation>
    <scope>NUCLEOTIDE SEQUENCE [LARGE SCALE GENOMIC DNA]</scope>
    <source>
        <strain>S88 / ExPEC</strain>
    </source>
</reference>
<gene>
    <name evidence="1" type="primary">rpoB</name>
    <name type="ordered locus">ECS88_4448</name>
</gene>
<protein>
    <recommendedName>
        <fullName evidence="1">DNA-directed RNA polymerase subunit beta</fullName>
        <shortName evidence="1">RNAP subunit beta</shortName>
        <ecNumber evidence="1">2.7.7.6</ecNumber>
    </recommendedName>
    <alternativeName>
        <fullName evidence="1">RNA polymerase subunit beta</fullName>
    </alternativeName>
    <alternativeName>
        <fullName evidence="1">Transcriptase subunit beta</fullName>
    </alternativeName>
</protein>
<accession>B7MIX3</accession>
<organism>
    <name type="scientific">Escherichia coli O45:K1 (strain S88 / ExPEC)</name>
    <dbReference type="NCBI Taxonomy" id="585035"/>
    <lineage>
        <taxon>Bacteria</taxon>
        <taxon>Pseudomonadati</taxon>
        <taxon>Pseudomonadota</taxon>
        <taxon>Gammaproteobacteria</taxon>
        <taxon>Enterobacterales</taxon>
        <taxon>Enterobacteriaceae</taxon>
        <taxon>Escherichia</taxon>
    </lineage>
</organism>
<feature type="chain" id="PRO_1000141687" description="DNA-directed RNA polymerase subunit beta">
    <location>
        <begin position="1"/>
        <end position="1342"/>
    </location>
</feature>
<feature type="modified residue" description="N6-acetyllysine" evidence="1">
    <location>
        <position position="1022"/>
    </location>
</feature>
<feature type="modified residue" description="N6-acetyllysine" evidence="1">
    <location>
        <position position="1200"/>
    </location>
</feature>
<sequence length="1342" mass="150632">MVYSYTEKKRIRKDFGKRPQVLDVPYLLSIQLDSFQKFIEQDPEGQYGLEAAFRSVFPIQSYSGNSELQYVSYRLGEPVFDVQECQIRGVTYSAPLRVKLRLVIYEREAPEGTVKDIKEQEVYMGEIPLMTDNGTFVINGTERVIVSQLHRSPGVFFDSDKGKTHSSGKVLYNARIIPYRGSWLDFEFDPKDNLFVRIDRRRKLPATIILRALNYTTEQILDLFFEKVIFEIRDNKLQMELVPERLRGETASFDIEANGKVYVEKGRRITARHIRQLEKDDVKLIEVPVEYIAGKVVAKDYIDESTGELICAANMELSLDLLAKLSQSGHKRIETLFTNDLDHGPYISETLRVDPTNDRLSALVEIYRMMRPGEPPTREAAESLFENLFFSEDRYDLSAVGRMKFNRSLLREEIEGSGILSKDDIIDVMKKLIDIRNGKGEVDDIDHLGNRRIRSVGEMAENQFRVGLVRVERAVKERLSLGDLDTLMPQDMINAKPISAAVKEFFGSSQLSQFMDQNNPLSEITHKRRISALGPGGLTRERAGFEVRDVHPTHYGRVCPIETPEGPNIGLINSLSVYAQTNEYGFLETPYRKVTDGVVTDEIHYLSAIEEGNYVIAQANSNLDEEGHFVEDLVTCRSKGESSLFSRDQVDYMDVSTQQVVSVGASLIPFLEHDDANRALMGANMQRQAVPTLRADKPLVGTGMERAVAVDSGVTAVAKRGGVVQYVDASRIVIKVNEDEMYPGEAGIDIYNLTKYTRSNQNTCINQMPCVSLGEPVERGDVLADGPSTDLGELALGQNMRVAFMPWNGYNFEDSILVSERVVQEDRFTTIHIQELACVSRDTKLGPEEITADIPNVGEAALSKLDESGIVYIGAEVTGGDILVGKVTPKGETQLTPEEKLLRAIFGEKASDVKDSSLRVPNGVSGTVIDVQVFTRDGVEKDKRALEIEEMQLKQAKKDLSEELQILEAGLFSRIRAVLVAGGVEAEKLDKLPRDRWLELGLTDEEKQNQLEQLAEQYDELKHEFEKKLEAKRRKITQGDDLAPGVLKIVKVYLAVKRRIQPGDKMAGRHGNKGVISKINPIEDMPYDENGTPVDIVLNPLGVPSRMNIGQILETHLGMAAKGIGDKINAMLKQQQEVAKLREFIQRAYDLGADVRQKVDLSTFSDEEVMRLAENLRKGMPIATPVFDGAKEAEIKELLKLGDLPTSGQIRLYDGRTGEQFERPVTVGYMYMLKLNHLVDDKMHARSTGSYSLVTQQPLGGKAQFGGQRFGEMEVWALEAYGAAYTLQEMLTVKSDDVNGRTKMYKNIVDGNHQMEPGMPESFNVLLKEIRSLGINIELEDE</sequence>
<keyword id="KW-0007">Acetylation</keyword>
<keyword id="KW-0240">DNA-directed RNA polymerase</keyword>
<keyword id="KW-0548">Nucleotidyltransferase</keyword>
<keyword id="KW-1185">Reference proteome</keyword>
<keyword id="KW-0804">Transcription</keyword>
<keyword id="KW-0808">Transferase</keyword>
<name>RPOB_ECO45</name>
<dbReference type="EC" id="2.7.7.6" evidence="1"/>
<dbReference type="EMBL" id="CU928161">
    <property type="protein sequence ID" value="CAR05617.1"/>
    <property type="molecule type" value="Genomic_DNA"/>
</dbReference>
<dbReference type="RefSeq" id="WP_000263098.1">
    <property type="nucleotide sequence ID" value="NC_011742.1"/>
</dbReference>
<dbReference type="EMDB" id="EMD-20286"/>
<dbReference type="EMDB" id="EMD-20287"/>
<dbReference type="EMDB" id="EMD-20288"/>
<dbReference type="EMDB" id="EMD-20394"/>
<dbReference type="EMDB" id="EMD-20395"/>
<dbReference type="EMDB" id="EMD-22184"/>
<dbReference type="EMDB" id="EMD-22185"/>
<dbReference type="EMDB" id="EMD-22234"/>
<dbReference type="EMDB" id="EMD-22236"/>
<dbReference type="EMDB" id="EMD-22245"/>
<dbReference type="EMDB" id="EMD-22247"/>
<dbReference type="EMDB" id="EMD-22248"/>
<dbReference type="EMDB" id="EMD-22249"/>
<dbReference type="EMDB" id="EMD-7014"/>
<dbReference type="EMDB" id="EMD-7015"/>
<dbReference type="EMDB" id="EMD-7016"/>
<dbReference type="EMDB" id="EMD-7059"/>
<dbReference type="EMDB" id="EMD-8585"/>
<dbReference type="SMR" id="B7MIX3"/>
<dbReference type="GeneID" id="93777907"/>
<dbReference type="KEGG" id="ecz:ECS88_4448"/>
<dbReference type="HOGENOM" id="CLU_000524_4_3_6"/>
<dbReference type="Proteomes" id="UP000000747">
    <property type="component" value="Chromosome"/>
</dbReference>
<dbReference type="GO" id="GO:0000428">
    <property type="term" value="C:DNA-directed RNA polymerase complex"/>
    <property type="evidence" value="ECO:0007669"/>
    <property type="project" value="UniProtKB-KW"/>
</dbReference>
<dbReference type="GO" id="GO:0003677">
    <property type="term" value="F:DNA binding"/>
    <property type="evidence" value="ECO:0007669"/>
    <property type="project" value="UniProtKB-UniRule"/>
</dbReference>
<dbReference type="GO" id="GO:0003899">
    <property type="term" value="F:DNA-directed RNA polymerase activity"/>
    <property type="evidence" value="ECO:0007669"/>
    <property type="project" value="UniProtKB-UniRule"/>
</dbReference>
<dbReference type="GO" id="GO:0032549">
    <property type="term" value="F:ribonucleoside binding"/>
    <property type="evidence" value="ECO:0007669"/>
    <property type="project" value="InterPro"/>
</dbReference>
<dbReference type="GO" id="GO:0006351">
    <property type="term" value="P:DNA-templated transcription"/>
    <property type="evidence" value="ECO:0007669"/>
    <property type="project" value="UniProtKB-UniRule"/>
</dbReference>
<dbReference type="CDD" id="cd00653">
    <property type="entry name" value="RNA_pol_B_RPB2"/>
    <property type="match status" value="1"/>
</dbReference>
<dbReference type="FunFam" id="2.30.150.10:FF:000001">
    <property type="entry name" value="DNA-directed RNA polymerase subunit beta"/>
    <property type="match status" value="1"/>
</dbReference>
<dbReference type="FunFam" id="2.40.270.10:FF:000003">
    <property type="entry name" value="DNA-directed RNA polymerase subunit beta"/>
    <property type="match status" value="1"/>
</dbReference>
<dbReference type="FunFam" id="2.40.270.10:FF:000004">
    <property type="entry name" value="DNA-directed RNA polymerase subunit beta"/>
    <property type="match status" value="1"/>
</dbReference>
<dbReference type="FunFam" id="2.40.50.100:FF:000006">
    <property type="entry name" value="DNA-directed RNA polymerase subunit beta"/>
    <property type="match status" value="1"/>
</dbReference>
<dbReference type="FunFam" id="2.40.50.150:FF:000001">
    <property type="entry name" value="DNA-directed RNA polymerase subunit beta"/>
    <property type="match status" value="1"/>
</dbReference>
<dbReference type="FunFam" id="3.90.1100.10:FF:000002">
    <property type="entry name" value="DNA-directed RNA polymerase subunit beta"/>
    <property type="match status" value="1"/>
</dbReference>
<dbReference type="FunFam" id="3.90.1110.10:FF:000001">
    <property type="entry name" value="DNA-directed RNA polymerase subunit beta"/>
    <property type="match status" value="1"/>
</dbReference>
<dbReference type="FunFam" id="3.90.1110.10:FF:000004">
    <property type="entry name" value="DNA-directed RNA polymerase subunit beta"/>
    <property type="match status" value="1"/>
</dbReference>
<dbReference type="FunFam" id="3.90.1800.10:FF:000001">
    <property type="entry name" value="DNA-directed RNA polymerase subunit beta"/>
    <property type="match status" value="1"/>
</dbReference>
<dbReference type="Gene3D" id="2.40.50.100">
    <property type="match status" value="1"/>
</dbReference>
<dbReference type="Gene3D" id="2.40.50.150">
    <property type="match status" value="1"/>
</dbReference>
<dbReference type="Gene3D" id="3.90.1100.10">
    <property type="match status" value="2"/>
</dbReference>
<dbReference type="Gene3D" id="6.10.140.1670">
    <property type="match status" value="1"/>
</dbReference>
<dbReference type="Gene3D" id="2.30.150.10">
    <property type="entry name" value="DNA-directed RNA polymerase, beta subunit, external 1 domain"/>
    <property type="match status" value="1"/>
</dbReference>
<dbReference type="Gene3D" id="2.40.270.10">
    <property type="entry name" value="DNA-directed RNA polymerase, subunit 2, domain 6"/>
    <property type="match status" value="1"/>
</dbReference>
<dbReference type="Gene3D" id="3.90.1800.10">
    <property type="entry name" value="RNA polymerase alpha subunit dimerisation domain"/>
    <property type="match status" value="1"/>
</dbReference>
<dbReference type="Gene3D" id="3.90.1110.10">
    <property type="entry name" value="RNA polymerase Rpb2, domain 2"/>
    <property type="match status" value="1"/>
</dbReference>
<dbReference type="HAMAP" id="MF_01321">
    <property type="entry name" value="RNApol_bact_RpoB"/>
    <property type="match status" value="1"/>
</dbReference>
<dbReference type="InterPro" id="IPR042107">
    <property type="entry name" value="DNA-dir_RNA_pol_bsu_ext_1_sf"/>
</dbReference>
<dbReference type="InterPro" id="IPR019462">
    <property type="entry name" value="DNA-dir_RNA_pol_bsu_external_1"/>
</dbReference>
<dbReference type="InterPro" id="IPR015712">
    <property type="entry name" value="DNA-dir_RNA_pol_su2"/>
</dbReference>
<dbReference type="InterPro" id="IPR007120">
    <property type="entry name" value="DNA-dir_RNAP_su2_dom"/>
</dbReference>
<dbReference type="InterPro" id="IPR037033">
    <property type="entry name" value="DNA-dir_RNAP_su2_hyb_sf"/>
</dbReference>
<dbReference type="InterPro" id="IPR010243">
    <property type="entry name" value="RNA_pol_bsu_bac"/>
</dbReference>
<dbReference type="InterPro" id="IPR007121">
    <property type="entry name" value="RNA_pol_bsu_CS"/>
</dbReference>
<dbReference type="InterPro" id="IPR007644">
    <property type="entry name" value="RNA_pol_bsu_protrusion"/>
</dbReference>
<dbReference type="InterPro" id="IPR007642">
    <property type="entry name" value="RNA_pol_Rpb2_2"/>
</dbReference>
<dbReference type="InterPro" id="IPR037034">
    <property type="entry name" value="RNA_pol_Rpb2_2_sf"/>
</dbReference>
<dbReference type="InterPro" id="IPR007645">
    <property type="entry name" value="RNA_pol_Rpb2_3"/>
</dbReference>
<dbReference type="InterPro" id="IPR007641">
    <property type="entry name" value="RNA_pol_Rpb2_7"/>
</dbReference>
<dbReference type="InterPro" id="IPR014724">
    <property type="entry name" value="RNA_pol_RPB2_OB-fold"/>
</dbReference>
<dbReference type="NCBIfam" id="NF001616">
    <property type="entry name" value="PRK00405.1"/>
    <property type="match status" value="1"/>
</dbReference>
<dbReference type="NCBIfam" id="TIGR02013">
    <property type="entry name" value="rpoB"/>
    <property type="match status" value="1"/>
</dbReference>
<dbReference type="PANTHER" id="PTHR20856">
    <property type="entry name" value="DNA-DIRECTED RNA POLYMERASE I SUBUNIT 2"/>
    <property type="match status" value="1"/>
</dbReference>
<dbReference type="Pfam" id="PF04563">
    <property type="entry name" value="RNA_pol_Rpb2_1"/>
    <property type="match status" value="1"/>
</dbReference>
<dbReference type="Pfam" id="PF04561">
    <property type="entry name" value="RNA_pol_Rpb2_2"/>
    <property type="match status" value="2"/>
</dbReference>
<dbReference type="Pfam" id="PF04565">
    <property type="entry name" value="RNA_pol_Rpb2_3"/>
    <property type="match status" value="1"/>
</dbReference>
<dbReference type="Pfam" id="PF10385">
    <property type="entry name" value="RNA_pol_Rpb2_45"/>
    <property type="match status" value="1"/>
</dbReference>
<dbReference type="Pfam" id="PF00562">
    <property type="entry name" value="RNA_pol_Rpb2_6"/>
    <property type="match status" value="1"/>
</dbReference>
<dbReference type="Pfam" id="PF04560">
    <property type="entry name" value="RNA_pol_Rpb2_7"/>
    <property type="match status" value="1"/>
</dbReference>
<dbReference type="SUPFAM" id="SSF64484">
    <property type="entry name" value="beta and beta-prime subunits of DNA dependent RNA-polymerase"/>
    <property type="match status" value="1"/>
</dbReference>
<dbReference type="PROSITE" id="PS01166">
    <property type="entry name" value="RNA_POL_BETA"/>
    <property type="match status" value="1"/>
</dbReference>